<organism>
    <name type="scientific">Sphingopyxis alaskensis (strain DSM 13593 / LMG 18877 / RB2256)</name>
    <name type="common">Sphingomonas alaskensis</name>
    <dbReference type="NCBI Taxonomy" id="317655"/>
    <lineage>
        <taxon>Bacteria</taxon>
        <taxon>Pseudomonadati</taxon>
        <taxon>Pseudomonadota</taxon>
        <taxon>Alphaproteobacteria</taxon>
        <taxon>Sphingomonadales</taxon>
        <taxon>Sphingomonadaceae</taxon>
        <taxon>Sphingopyxis</taxon>
    </lineage>
</organism>
<accession>Q1GS38</accession>
<sequence length="194" mass="20473">MTVLLALDGVACIRGDRLVFEELSLALNRGDALWVRGPNGAGKSSLIRLAAGLLRPAAGRVVRRGRIALIDEAAALDSELPLRRALDFWARVDTVDGHAVDRAMDMMALNTLADVPVAMLSTGQRRRAAMVRVIASGAPIWLLDEPANGMDQAATARLVAAIATHRANGGAVLLASHFALAIPDLDELVMGVLA</sequence>
<name>CCMA_SPHAL</name>
<reference key="1">
    <citation type="journal article" date="2009" name="Proc. Natl. Acad. Sci. U.S.A.">
        <title>The genomic basis of trophic strategy in marine bacteria.</title>
        <authorList>
            <person name="Lauro F.M."/>
            <person name="McDougald D."/>
            <person name="Thomas T."/>
            <person name="Williams T.J."/>
            <person name="Egan S."/>
            <person name="Rice S."/>
            <person name="DeMaere M.Z."/>
            <person name="Ting L."/>
            <person name="Ertan H."/>
            <person name="Johnson J."/>
            <person name="Ferriera S."/>
            <person name="Lapidus A."/>
            <person name="Anderson I."/>
            <person name="Kyrpides N."/>
            <person name="Munk A.C."/>
            <person name="Detter C."/>
            <person name="Han C.S."/>
            <person name="Brown M.V."/>
            <person name="Robb F.T."/>
            <person name="Kjelleberg S."/>
            <person name="Cavicchioli R."/>
        </authorList>
    </citation>
    <scope>NUCLEOTIDE SEQUENCE [LARGE SCALE GENOMIC DNA]</scope>
    <source>
        <strain>DSM 13593 / LMG 18877 / RB2256</strain>
    </source>
</reference>
<feature type="chain" id="PRO_0000271964" description="Cytochrome c biogenesis ATP-binding export protein CcmA">
    <location>
        <begin position="1"/>
        <end position="194"/>
    </location>
</feature>
<feature type="domain" description="ABC transporter" evidence="1">
    <location>
        <begin position="5"/>
        <end position="194"/>
    </location>
</feature>
<feature type="binding site" evidence="1">
    <location>
        <begin position="37"/>
        <end position="44"/>
    </location>
    <ligand>
        <name>ATP</name>
        <dbReference type="ChEBI" id="CHEBI:30616"/>
    </ligand>
</feature>
<proteinExistence type="inferred from homology"/>
<protein>
    <recommendedName>
        <fullName evidence="1">Cytochrome c biogenesis ATP-binding export protein CcmA</fullName>
        <ecNumber evidence="1">7.6.2.5</ecNumber>
    </recommendedName>
    <alternativeName>
        <fullName evidence="1">Heme exporter protein A</fullName>
    </alternativeName>
</protein>
<keyword id="KW-0067">ATP-binding</keyword>
<keyword id="KW-0997">Cell inner membrane</keyword>
<keyword id="KW-1003">Cell membrane</keyword>
<keyword id="KW-0201">Cytochrome c-type biogenesis</keyword>
<keyword id="KW-0472">Membrane</keyword>
<keyword id="KW-0547">Nucleotide-binding</keyword>
<keyword id="KW-1185">Reference proteome</keyword>
<keyword id="KW-1278">Translocase</keyword>
<keyword id="KW-0813">Transport</keyword>
<comment type="function">
    <text evidence="1">Part of the ABC transporter complex CcmAB involved in the biogenesis of c-type cytochromes; once thought to export heme, this seems not to be the case, but its exact role is uncertain. Responsible for energy coupling to the transport system.</text>
</comment>
<comment type="catalytic activity">
    <reaction evidence="1">
        <text>heme b(in) + ATP + H2O = heme b(out) + ADP + phosphate + H(+)</text>
        <dbReference type="Rhea" id="RHEA:19261"/>
        <dbReference type="ChEBI" id="CHEBI:15377"/>
        <dbReference type="ChEBI" id="CHEBI:15378"/>
        <dbReference type="ChEBI" id="CHEBI:30616"/>
        <dbReference type="ChEBI" id="CHEBI:43474"/>
        <dbReference type="ChEBI" id="CHEBI:60344"/>
        <dbReference type="ChEBI" id="CHEBI:456216"/>
        <dbReference type="EC" id="7.6.2.5"/>
    </reaction>
</comment>
<comment type="subunit">
    <text evidence="1">The complex is composed of two ATP-binding proteins (CcmA) and two transmembrane proteins (CcmB).</text>
</comment>
<comment type="subcellular location">
    <subcellularLocation>
        <location evidence="1">Cell inner membrane</location>
        <topology evidence="1">Peripheral membrane protein</topology>
    </subcellularLocation>
</comment>
<comment type="similarity">
    <text evidence="1">Belongs to the ABC transporter superfamily. CcmA exporter (TC 3.A.1.107) family.</text>
</comment>
<evidence type="ECO:0000255" key="1">
    <source>
        <dbReference type="HAMAP-Rule" id="MF_01707"/>
    </source>
</evidence>
<dbReference type="EC" id="7.6.2.5" evidence="1"/>
<dbReference type="EMBL" id="CP000356">
    <property type="protein sequence ID" value="ABF53534.1"/>
    <property type="molecule type" value="Genomic_DNA"/>
</dbReference>
<dbReference type="RefSeq" id="WP_011542112.1">
    <property type="nucleotide sequence ID" value="NC_008048.1"/>
</dbReference>
<dbReference type="SMR" id="Q1GS38"/>
<dbReference type="STRING" id="317655.Sala_1822"/>
<dbReference type="KEGG" id="sal:Sala_1822"/>
<dbReference type="eggNOG" id="COG4133">
    <property type="taxonomic scope" value="Bacteria"/>
</dbReference>
<dbReference type="HOGENOM" id="CLU_000604_1_2_5"/>
<dbReference type="OrthoDB" id="9800654at2"/>
<dbReference type="Proteomes" id="UP000006578">
    <property type="component" value="Chromosome"/>
</dbReference>
<dbReference type="GO" id="GO:0005886">
    <property type="term" value="C:plasma membrane"/>
    <property type="evidence" value="ECO:0007669"/>
    <property type="project" value="UniProtKB-SubCell"/>
</dbReference>
<dbReference type="GO" id="GO:0015439">
    <property type="term" value="F:ABC-type heme transporter activity"/>
    <property type="evidence" value="ECO:0007669"/>
    <property type="project" value="UniProtKB-EC"/>
</dbReference>
<dbReference type="GO" id="GO:0005524">
    <property type="term" value="F:ATP binding"/>
    <property type="evidence" value="ECO:0007669"/>
    <property type="project" value="UniProtKB-KW"/>
</dbReference>
<dbReference type="GO" id="GO:0016887">
    <property type="term" value="F:ATP hydrolysis activity"/>
    <property type="evidence" value="ECO:0007669"/>
    <property type="project" value="InterPro"/>
</dbReference>
<dbReference type="GO" id="GO:0017004">
    <property type="term" value="P:cytochrome complex assembly"/>
    <property type="evidence" value="ECO:0007669"/>
    <property type="project" value="UniProtKB-KW"/>
</dbReference>
<dbReference type="Gene3D" id="3.40.50.300">
    <property type="entry name" value="P-loop containing nucleotide triphosphate hydrolases"/>
    <property type="match status" value="1"/>
</dbReference>
<dbReference type="InterPro" id="IPR003593">
    <property type="entry name" value="AAA+_ATPase"/>
</dbReference>
<dbReference type="InterPro" id="IPR003439">
    <property type="entry name" value="ABC_transporter-like_ATP-bd"/>
</dbReference>
<dbReference type="InterPro" id="IPR005895">
    <property type="entry name" value="ABC_transptr_haem_export_CcmA"/>
</dbReference>
<dbReference type="InterPro" id="IPR027417">
    <property type="entry name" value="P-loop_NTPase"/>
</dbReference>
<dbReference type="NCBIfam" id="TIGR01189">
    <property type="entry name" value="ccmA"/>
    <property type="match status" value="1"/>
</dbReference>
<dbReference type="PANTHER" id="PTHR43499">
    <property type="entry name" value="ABC TRANSPORTER I FAMILY MEMBER 1"/>
    <property type="match status" value="1"/>
</dbReference>
<dbReference type="PANTHER" id="PTHR43499:SF1">
    <property type="entry name" value="ABC TRANSPORTER I FAMILY MEMBER 1"/>
    <property type="match status" value="1"/>
</dbReference>
<dbReference type="Pfam" id="PF00005">
    <property type="entry name" value="ABC_tran"/>
    <property type="match status" value="1"/>
</dbReference>
<dbReference type="SMART" id="SM00382">
    <property type="entry name" value="AAA"/>
    <property type="match status" value="1"/>
</dbReference>
<dbReference type="SUPFAM" id="SSF52540">
    <property type="entry name" value="P-loop containing nucleoside triphosphate hydrolases"/>
    <property type="match status" value="1"/>
</dbReference>
<dbReference type="PROSITE" id="PS50893">
    <property type="entry name" value="ABC_TRANSPORTER_2"/>
    <property type="match status" value="1"/>
</dbReference>
<dbReference type="PROSITE" id="PS51243">
    <property type="entry name" value="CCMA"/>
    <property type="match status" value="1"/>
</dbReference>
<gene>
    <name evidence="1" type="primary">ccmA</name>
    <name type="ordered locus">Sala_1822</name>
</gene>